<evidence type="ECO:0000255" key="1">
    <source>
        <dbReference type="HAMAP-Rule" id="MF_01537"/>
    </source>
</evidence>
<dbReference type="EC" id="2.4.2.1" evidence="1"/>
<dbReference type="EC" id="2.4.2.2" evidence="1"/>
<dbReference type="EMBL" id="CP000083">
    <property type="protein sequence ID" value="AAZ28661.1"/>
    <property type="molecule type" value="Genomic_DNA"/>
</dbReference>
<dbReference type="RefSeq" id="WP_011045557.1">
    <property type="nucleotide sequence ID" value="NC_003910.7"/>
</dbReference>
<dbReference type="SMR" id="Q47UP5"/>
<dbReference type="STRING" id="167879.CPS_4838"/>
<dbReference type="KEGG" id="cps:CPS_4838"/>
<dbReference type="eggNOG" id="COG3123">
    <property type="taxonomic scope" value="Bacteria"/>
</dbReference>
<dbReference type="HOGENOM" id="CLU_157874_1_0_6"/>
<dbReference type="Proteomes" id="UP000000547">
    <property type="component" value="Chromosome"/>
</dbReference>
<dbReference type="GO" id="GO:0005829">
    <property type="term" value="C:cytosol"/>
    <property type="evidence" value="ECO:0007669"/>
    <property type="project" value="TreeGrafter"/>
</dbReference>
<dbReference type="GO" id="GO:0047975">
    <property type="term" value="F:guanosine phosphorylase activity"/>
    <property type="evidence" value="ECO:0007669"/>
    <property type="project" value="UniProtKB-EC"/>
</dbReference>
<dbReference type="GO" id="GO:0004731">
    <property type="term" value="F:purine-nucleoside phosphorylase activity"/>
    <property type="evidence" value="ECO:0007669"/>
    <property type="project" value="UniProtKB-UniRule"/>
</dbReference>
<dbReference type="GO" id="GO:0009032">
    <property type="term" value="F:thymidine phosphorylase activity"/>
    <property type="evidence" value="ECO:0007669"/>
    <property type="project" value="UniProtKB-EC"/>
</dbReference>
<dbReference type="GO" id="GO:0004850">
    <property type="term" value="F:uridine phosphorylase activity"/>
    <property type="evidence" value="ECO:0007669"/>
    <property type="project" value="UniProtKB-EC"/>
</dbReference>
<dbReference type="CDD" id="cd20296">
    <property type="entry name" value="cupin_PpnP-like"/>
    <property type="match status" value="1"/>
</dbReference>
<dbReference type="Gene3D" id="2.60.120.10">
    <property type="entry name" value="Jelly Rolls"/>
    <property type="match status" value="1"/>
</dbReference>
<dbReference type="HAMAP" id="MF_01537">
    <property type="entry name" value="Nucleos_phosphorylase_PpnP"/>
    <property type="match status" value="1"/>
</dbReference>
<dbReference type="InterPro" id="IPR009664">
    <property type="entry name" value="Ppnp"/>
</dbReference>
<dbReference type="InterPro" id="IPR014710">
    <property type="entry name" value="RmlC-like_jellyroll"/>
</dbReference>
<dbReference type="InterPro" id="IPR011051">
    <property type="entry name" value="RmlC_Cupin_sf"/>
</dbReference>
<dbReference type="PANTHER" id="PTHR36540">
    <property type="entry name" value="PYRIMIDINE/PURINE NUCLEOSIDE PHOSPHORYLASE"/>
    <property type="match status" value="1"/>
</dbReference>
<dbReference type="PANTHER" id="PTHR36540:SF1">
    <property type="entry name" value="PYRIMIDINE_PURINE NUCLEOSIDE PHOSPHORYLASE"/>
    <property type="match status" value="1"/>
</dbReference>
<dbReference type="Pfam" id="PF06865">
    <property type="entry name" value="Ppnp"/>
    <property type="match status" value="1"/>
</dbReference>
<dbReference type="SUPFAM" id="SSF51182">
    <property type="entry name" value="RmlC-like cupins"/>
    <property type="match status" value="1"/>
</dbReference>
<protein>
    <recommendedName>
        <fullName evidence="1">Pyrimidine/purine nucleoside phosphorylase</fullName>
        <ecNumber evidence="1">2.4.2.1</ecNumber>
        <ecNumber evidence="1">2.4.2.2</ecNumber>
    </recommendedName>
    <alternativeName>
        <fullName evidence="1">Adenosine phosphorylase</fullName>
    </alternativeName>
    <alternativeName>
        <fullName evidence="1">Cytidine phosphorylase</fullName>
    </alternativeName>
    <alternativeName>
        <fullName evidence="1">Guanosine phosphorylase</fullName>
    </alternativeName>
    <alternativeName>
        <fullName evidence="1">Inosine phosphorylase</fullName>
    </alternativeName>
    <alternativeName>
        <fullName evidence="1">Thymidine phosphorylase</fullName>
    </alternativeName>
    <alternativeName>
        <fullName evidence="1">Uridine phosphorylase</fullName>
    </alternativeName>
    <alternativeName>
        <fullName evidence="1">Xanthosine phosphorylase</fullName>
    </alternativeName>
</protein>
<feature type="chain" id="PRO_0000298692" description="Pyrimidine/purine nucleoside phosphorylase">
    <location>
        <begin position="1"/>
        <end position="104"/>
    </location>
</feature>
<name>PPNP_COLP3</name>
<accession>Q47UP5</accession>
<comment type="function">
    <text evidence="1">Catalyzes the phosphorolysis of diverse nucleosides, yielding D-ribose 1-phosphate and the respective free bases. Can use uridine, adenosine, guanosine, cytidine, thymidine, inosine and xanthosine as substrates. Also catalyzes the reverse reactions.</text>
</comment>
<comment type="catalytic activity">
    <reaction evidence="1">
        <text>a purine D-ribonucleoside + phosphate = a purine nucleobase + alpha-D-ribose 1-phosphate</text>
        <dbReference type="Rhea" id="RHEA:19805"/>
        <dbReference type="ChEBI" id="CHEBI:26386"/>
        <dbReference type="ChEBI" id="CHEBI:43474"/>
        <dbReference type="ChEBI" id="CHEBI:57720"/>
        <dbReference type="ChEBI" id="CHEBI:142355"/>
        <dbReference type="EC" id="2.4.2.1"/>
    </reaction>
</comment>
<comment type="catalytic activity">
    <reaction evidence="1">
        <text>adenosine + phosphate = alpha-D-ribose 1-phosphate + adenine</text>
        <dbReference type="Rhea" id="RHEA:27642"/>
        <dbReference type="ChEBI" id="CHEBI:16335"/>
        <dbReference type="ChEBI" id="CHEBI:16708"/>
        <dbReference type="ChEBI" id="CHEBI:43474"/>
        <dbReference type="ChEBI" id="CHEBI:57720"/>
        <dbReference type="EC" id="2.4.2.1"/>
    </reaction>
</comment>
<comment type="catalytic activity">
    <reaction evidence="1">
        <text>cytidine + phosphate = cytosine + alpha-D-ribose 1-phosphate</text>
        <dbReference type="Rhea" id="RHEA:52540"/>
        <dbReference type="ChEBI" id="CHEBI:16040"/>
        <dbReference type="ChEBI" id="CHEBI:17562"/>
        <dbReference type="ChEBI" id="CHEBI:43474"/>
        <dbReference type="ChEBI" id="CHEBI:57720"/>
        <dbReference type="EC" id="2.4.2.2"/>
    </reaction>
</comment>
<comment type="catalytic activity">
    <reaction evidence="1">
        <text>guanosine + phosphate = alpha-D-ribose 1-phosphate + guanine</text>
        <dbReference type="Rhea" id="RHEA:13233"/>
        <dbReference type="ChEBI" id="CHEBI:16235"/>
        <dbReference type="ChEBI" id="CHEBI:16750"/>
        <dbReference type="ChEBI" id="CHEBI:43474"/>
        <dbReference type="ChEBI" id="CHEBI:57720"/>
        <dbReference type="EC" id="2.4.2.1"/>
    </reaction>
</comment>
<comment type="catalytic activity">
    <reaction evidence="1">
        <text>inosine + phosphate = alpha-D-ribose 1-phosphate + hypoxanthine</text>
        <dbReference type="Rhea" id="RHEA:27646"/>
        <dbReference type="ChEBI" id="CHEBI:17368"/>
        <dbReference type="ChEBI" id="CHEBI:17596"/>
        <dbReference type="ChEBI" id="CHEBI:43474"/>
        <dbReference type="ChEBI" id="CHEBI:57720"/>
        <dbReference type="EC" id="2.4.2.1"/>
    </reaction>
</comment>
<comment type="catalytic activity">
    <reaction evidence="1">
        <text>thymidine + phosphate = 2-deoxy-alpha-D-ribose 1-phosphate + thymine</text>
        <dbReference type="Rhea" id="RHEA:16037"/>
        <dbReference type="ChEBI" id="CHEBI:17748"/>
        <dbReference type="ChEBI" id="CHEBI:17821"/>
        <dbReference type="ChEBI" id="CHEBI:43474"/>
        <dbReference type="ChEBI" id="CHEBI:57259"/>
        <dbReference type="EC" id="2.4.2.2"/>
    </reaction>
</comment>
<comment type="catalytic activity">
    <reaction evidence="1">
        <text>uridine + phosphate = alpha-D-ribose 1-phosphate + uracil</text>
        <dbReference type="Rhea" id="RHEA:24388"/>
        <dbReference type="ChEBI" id="CHEBI:16704"/>
        <dbReference type="ChEBI" id="CHEBI:17568"/>
        <dbReference type="ChEBI" id="CHEBI:43474"/>
        <dbReference type="ChEBI" id="CHEBI:57720"/>
        <dbReference type="EC" id="2.4.2.2"/>
    </reaction>
</comment>
<comment type="catalytic activity">
    <reaction evidence="1">
        <text>xanthosine + phosphate = alpha-D-ribose 1-phosphate + xanthine</text>
        <dbReference type="Rhea" id="RHEA:27638"/>
        <dbReference type="ChEBI" id="CHEBI:17712"/>
        <dbReference type="ChEBI" id="CHEBI:18107"/>
        <dbReference type="ChEBI" id="CHEBI:43474"/>
        <dbReference type="ChEBI" id="CHEBI:57720"/>
        <dbReference type="EC" id="2.4.2.1"/>
    </reaction>
</comment>
<comment type="similarity">
    <text evidence="1">Belongs to the nucleoside phosphorylase PpnP family.</text>
</comment>
<sequence length="104" mass="11463">MSEFKEVTVTKAASVYFDGKVTSRKVTFNDGSFKTLGIMMPGEYKFGTNEEELMEITAGECEILLAGATEWQNISDGQSFGVPANSSFEVRAKTLIDYCCTYIS</sequence>
<proteinExistence type="inferred from homology"/>
<keyword id="KW-0328">Glycosyltransferase</keyword>
<keyword id="KW-0808">Transferase</keyword>
<gene>
    <name evidence="1" type="primary">ppnP</name>
    <name type="ordered locus">CPS_4838</name>
</gene>
<reference key="1">
    <citation type="journal article" date="2005" name="Proc. Natl. Acad. Sci. U.S.A.">
        <title>The psychrophilic lifestyle as revealed by the genome sequence of Colwellia psychrerythraea 34H through genomic and proteomic analyses.</title>
        <authorList>
            <person name="Methe B.A."/>
            <person name="Nelson K.E."/>
            <person name="Deming J.W."/>
            <person name="Momen B."/>
            <person name="Melamud E."/>
            <person name="Zhang X."/>
            <person name="Moult J."/>
            <person name="Madupu R."/>
            <person name="Nelson W.C."/>
            <person name="Dodson R.J."/>
            <person name="Brinkac L.M."/>
            <person name="Daugherty S.C."/>
            <person name="Durkin A.S."/>
            <person name="DeBoy R.T."/>
            <person name="Kolonay J.F."/>
            <person name="Sullivan S.A."/>
            <person name="Zhou L."/>
            <person name="Davidsen T.M."/>
            <person name="Wu M."/>
            <person name="Huston A.L."/>
            <person name="Lewis M."/>
            <person name="Weaver B."/>
            <person name="Weidman J.F."/>
            <person name="Khouri H."/>
            <person name="Utterback T.R."/>
            <person name="Feldblyum T.V."/>
            <person name="Fraser C.M."/>
        </authorList>
    </citation>
    <scope>NUCLEOTIDE SEQUENCE [LARGE SCALE GENOMIC DNA]</scope>
    <source>
        <strain>34H / ATCC BAA-681</strain>
    </source>
</reference>
<organism>
    <name type="scientific">Colwellia psychrerythraea (strain 34H / ATCC BAA-681)</name>
    <name type="common">Vibrio psychroerythus</name>
    <dbReference type="NCBI Taxonomy" id="167879"/>
    <lineage>
        <taxon>Bacteria</taxon>
        <taxon>Pseudomonadati</taxon>
        <taxon>Pseudomonadota</taxon>
        <taxon>Gammaproteobacteria</taxon>
        <taxon>Alteromonadales</taxon>
        <taxon>Colwelliaceae</taxon>
        <taxon>Colwellia</taxon>
    </lineage>
</organism>